<gene>
    <name evidence="1" type="primary">nuoI</name>
    <name type="ordered locus">Sala_1301</name>
</gene>
<organism>
    <name type="scientific">Sphingopyxis alaskensis (strain DSM 13593 / LMG 18877 / RB2256)</name>
    <name type="common">Sphingomonas alaskensis</name>
    <dbReference type="NCBI Taxonomy" id="317655"/>
    <lineage>
        <taxon>Bacteria</taxon>
        <taxon>Pseudomonadati</taxon>
        <taxon>Pseudomonadota</taxon>
        <taxon>Alphaproteobacteria</taxon>
        <taxon>Sphingomonadales</taxon>
        <taxon>Sphingomonadaceae</taxon>
        <taxon>Sphingopyxis</taxon>
    </lineage>
</organism>
<keyword id="KW-0004">4Fe-4S</keyword>
<keyword id="KW-0997">Cell inner membrane</keyword>
<keyword id="KW-1003">Cell membrane</keyword>
<keyword id="KW-0408">Iron</keyword>
<keyword id="KW-0411">Iron-sulfur</keyword>
<keyword id="KW-0472">Membrane</keyword>
<keyword id="KW-0479">Metal-binding</keyword>
<keyword id="KW-0520">NAD</keyword>
<keyword id="KW-0874">Quinone</keyword>
<keyword id="KW-1185">Reference proteome</keyword>
<keyword id="KW-0677">Repeat</keyword>
<keyword id="KW-1278">Translocase</keyword>
<keyword id="KW-0830">Ubiquinone</keyword>
<dbReference type="EC" id="7.1.1.-" evidence="1"/>
<dbReference type="EMBL" id="CP000356">
    <property type="protein sequence ID" value="ABF53015.1"/>
    <property type="molecule type" value="Genomic_DNA"/>
</dbReference>
<dbReference type="RefSeq" id="WP_011541597.1">
    <property type="nucleotide sequence ID" value="NC_008048.1"/>
</dbReference>
<dbReference type="SMR" id="Q1GTK7"/>
<dbReference type="STRING" id="317655.Sala_1301"/>
<dbReference type="KEGG" id="sal:Sala_1301"/>
<dbReference type="eggNOG" id="COG1143">
    <property type="taxonomic scope" value="Bacteria"/>
</dbReference>
<dbReference type="HOGENOM" id="CLU_067218_5_1_5"/>
<dbReference type="OrthoDB" id="9808559at2"/>
<dbReference type="Proteomes" id="UP000006578">
    <property type="component" value="Chromosome"/>
</dbReference>
<dbReference type="GO" id="GO:0005886">
    <property type="term" value="C:plasma membrane"/>
    <property type="evidence" value="ECO:0007669"/>
    <property type="project" value="UniProtKB-SubCell"/>
</dbReference>
<dbReference type="GO" id="GO:0051539">
    <property type="term" value="F:4 iron, 4 sulfur cluster binding"/>
    <property type="evidence" value="ECO:0007669"/>
    <property type="project" value="UniProtKB-KW"/>
</dbReference>
<dbReference type="GO" id="GO:0005506">
    <property type="term" value="F:iron ion binding"/>
    <property type="evidence" value="ECO:0007669"/>
    <property type="project" value="UniProtKB-UniRule"/>
</dbReference>
<dbReference type="GO" id="GO:0050136">
    <property type="term" value="F:NADH:ubiquinone reductase (non-electrogenic) activity"/>
    <property type="evidence" value="ECO:0007669"/>
    <property type="project" value="UniProtKB-UniRule"/>
</dbReference>
<dbReference type="GO" id="GO:0048038">
    <property type="term" value="F:quinone binding"/>
    <property type="evidence" value="ECO:0007669"/>
    <property type="project" value="UniProtKB-KW"/>
</dbReference>
<dbReference type="GO" id="GO:0009060">
    <property type="term" value="P:aerobic respiration"/>
    <property type="evidence" value="ECO:0007669"/>
    <property type="project" value="TreeGrafter"/>
</dbReference>
<dbReference type="FunFam" id="3.30.70.3270:FF:000001">
    <property type="entry name" value="NADH-quinone oxidoreductase subunit I 1"/>
    <property type="match status" value="1"/>
</dbReference>
<dbReference type="Gene3D" id="3.30.70.3270">
    <property type="match status" value="1"/>
</dbReference>
<dbReference type="HAMAP" id="MF_01351">
    <property type="entry name" value="NDH1_NuoI"/>
    <property type="match status" value="1"/>
</dbReference>
<dbReference type="InterPro" id="IPR017896">
    <property type="entry name" value="4Fe4S_Fe-S-bd"/>
</dbReference>
<dbReference type="InterPro" id="IPR017900">
    <property type="entry name" value="4Fe4S_Fe_S_CS"/>
</dbReference>
<dbReference type="InterPro" id="IPR010226">
    <property type="entry name" value="NADH_quinone_OxRdtase_chainI"/>
</dbReference>
<dbReference type="NCBIfam" id="TIGR01971">
    <property type="entry name" value="NuoI"/>
    <property type="match status" value="1"/>
</dbReference>
<dbReference type="NCBIfam" id="NF004538">
    <property type="entry name" value="PRK05888.1-4"/>
    <property type="match status" value="1"/>
</dbReference>
<dbReference type="NCBIfam" id="NF004539">
    <property type="entry name" value="PRK05888.1-5"/>
    <property type="match status" value="1"/>
</dbReference>
<dbReference type="PANTHER" id="PTHR10849:SF20">
    <property type="entry name" value="NADH DEHYDROGENASE [UBIQUINONE] IRON-SULFUR PROTEIN 8, MITOCHONDRIAL"/>
    <property type="match status" value="1"/>
</dbReference>
<dbReference type="PANTHER" id="PTHR10849">
    <property type="entry name" value="NADH DEHYDROGENASE UBIQUINONE IRON-SULFUR PROTEIN 8, MITOCHONDRIAL"/>
    <property type="match status" value="1"/>
</dbReference>
<dbReference type="Pfam" id="PF12838">
    <property type="entry name" value="Fer4_7"/>
    <property type="match status" value="1"/>
</dbReference>
<dbReference type="SUPFAM" id="SSF54862">
    <property type="entry name" value="4Fe-4S ferredoxins"/>
    <property type="match status" value="1"/>
</dbReference>
<dbReference type="PROSITE" id="PS00198">
    <property type="entry name" value="4FE4S_FER_1"/>
    <property type="match status" value="2"/>
</dbReference>
<dbReference type="PROSITE" id="PS51379">
    <property type="entry name" value="4FE4S_FER_2"/>
    <property type="match status" value="2"/>
</dbReference>
<name>NUOI_SPHAL</name>
<proteinExistence type="inferred from homology"/>
<accession>Q1GTK7</accession>
<feature type="chain" id="PRO_0000298551" description="NADH-quinone oxidoreductase subunit I">
    <location>
        <begin position="1"/>
        <end position="162"/>
    </location>
</feature>
<feature type="domain" description="4Fe-4S ferredoxin-type 1" evidence="1">
    <location>
        <begin position="53"/>
        <end position="83"/>
    </location>
</feature>
<feature type="domain" description="4Fe-4S ferredoxin-type 2" evidence="1">
    <location>
        <begin position="93"/>
        <end position="122"/>
    </location>
</feature>
<feature type="binding site" evidence="1">
    <location>
        <position position="63"/>
    </location>
    <ligand>
        <name>[4Fe-4S] cluster</name>
        <dbReference type="ChEBI" id="CHEBI:49883"/>
        <label>1</label>
    </ligand>
</feature>
<feature type="binding site" evidence="1">
    <location>
        <position position="66"/>
    </location>
    <ligand>
        <name>[4Fe-4S] cluster</name>
        <dbReference type="ChEBI" id="CHEBI:49883"/>
        <label>1</label>
    </ligand>
</feature>
<feature type="binding site" evidence="1">
    <location>
        <position position="69"/>
    </location>
    <ligand>
        <name>[4Fe-4S] cluster</name>
        <dbReference type="ChEBI" id="CHEBI:49883"/>
        <label>1</label>
    </ligand>
</feature>
<feature type="binding site" evidence="1">
    <location>
        <position position="73"/>
    </location>
    <ligand>
        <name>[4Fe-4S] cluster</name>
        <dbReference type="ChEBI" id="CHEBI:49883"/>
        <label>2</label>
    </ligand>
</feature>
<feature type="binding site" evidence="1">
    <location>
        <position position="102"/>
    </location>
    <ligand>
        <name>[4Fe-4S] cluster</name>
        <dbReference type="ChEBI" id="CHEBI:49883"/>
        <label>2</label>
    </ligand>
</feature>
<feature type="binding site" evidence="1">
    <location>
        <position position="105"/>
    </location>
    <ligand>
        <name>[4Fe-4S] cluster</name>
        <dbReference type="ChEBI" id="CHEBI:49883"/>
        <label>2</label>
    </ligand>
</feature>
<feature type="binding site" evidence="1">
    <location>
        <position position="108"/>
    </location>
    <ligand>
        <name>[4Fe-4S] cluster</name>
        <dbReference type="ChEBI" id="CHEBI:49883"/>
        <label>2</label>
    </ligand>
</feature>
<feature type="binding site" evidence="1">
    <location>
        <position position="112"/>
    </location>
    <ligand>
        <name>[4Fe-4S] cluster</name>
        <dbReference type="ChEBI" id="CHEBI:49883"/>
        <label>1</label>
    </ligand>
</feature>
<sequence>MSYVGHLVKSFTLWEFVKAHALTLKYFFKPKATINYPFEKNPLSPRFRGEHALRRYPNGEERCIACKLCEAVCPAQAITIEAEPRDDGSRRTTRYDIDMTKCIYCGFCQEACPVDAIVEGPNFEYATETREELLYDKAKLLANGDKWERAIAANLAADAPYR</sequence>
<comment type="function">
    <text evidence="1">NDH-1 shuttles electrons from NADH, via FMN and iron-sulfur (Fe-S) centers, to quinones in the respiratory chain. The immediate electron acceptor for the enzyme in this species is believed to be ubiquinone. Couples the redox reaction to proton translocation (for every two electrons transferred, four hydrogen ions are translocated across the cytoplasmic membrane), and thus conserves the redox energy in a proton gradient.</text>
</comment>
<comment type="catalytic activity">
    <reaction evidence="1">
        <text>a quinone + NADH + 5 H(+)(in) = a quinol + NAD(+) + 4 H(+)(out)</text>
        <dbReference type="Rhea" id="RHEA:57888"/>
        <dbReference type="ChEBI" id="CHEBI:15378"/>
        <dbReference type="ChEBI" id="CHEBI:24646"/>
        <dbReference type="ChEBI" id="CHEBI:57540"/>
        <dbReference type="ChEBI" id="CHEBI:57945"/>
        <dbReference type="ChEBI" id="CHEBI:132124"/>
    </reaction>
</comment>
<comment type="cofactor">
    <cofactor evidence="1">
        <name>[4Fe-4S] cluster</name>
        <dbReference type="ChEBI" id="CHEBI:49883"/>
    </cofactor>
    <text evidence="1">Binds 2 [4Fe-4S] clusters per subunit.</text>
</comment>
<comment type="subunit">
    <text evidence="1">NDH-1 is composed of 14 different subunits. Subunits NuoA, H, J, K, L, M, N constitute the membrane sector of the complex.</text>
</comment>
<comment type="subcellular location">
    <subcellularLocation>
        <location evidence="1">Cell inner membrane</location>
        <topology evidence="1">Peripheral membrane protein</topology>
    </subcellularLocation>
</comment>
<comment type="similarity">
    <text evidence="1">Belongs to the complex I 23 kDa subunit family.</text>
</comment>
<protein>
    <recommendedName>
        <fullName evidence="1">NADH-quinone oxidoreductase subunit I</fullName>
        <ecNumber evidence="1">7.1.1.-</ecNumber>
    </recommendedName>
    <alternativeName>
        <fullName evidence="1">NADH dehydrogenase I subunit I</fullName>
    </alternativeName>
    <alternativeName>
        <fullName evidence="1">NDH-1 subunit I</fullName>
    </alternativeName>
</protein>
<reference key="1">
    <citation type="journal article" date="2009" name="Proc. Natl. Acad. Sci. U.S.A.">
        <title>The genomic basis of trophic strategy in marine bacteria.</title>
        <authorList>
            <person name="Lauro F.M."/>
            <person name="McDougald D."/>
            <person name="Thomas T."/>
            <person name="Williams T.J."/>
            <person name="Egan S."/>
            <person name="Rice S."/>
            <person name="DeMaere M.Z."/>
            <person name="Ting L."/>
            <person name="Ertan H."/>
            <person name="Johnson J."/>
            <person name="Ferriera S."/>
            <person name="Lapidus A."/>
            <person name="Anderson I."/>
            <person name="Kyrpides N."/>
            <person name="Munk A.C."/>
            <person name="Detter C."/>
            <person name="Han C.S."/>
            <person name="Brown M.V."/>
            <person name="Robb F.T."/>
            <person name="Kjelleberg S."/>
            <person name="Cavicchioli R."/>
        </authorList>
    </citation>
    <scope>NUCLEOTIDE SEQUENCE [LARGE SCALE GENOMIC DNA]</scope>
    <source>
        <strain>DSM 13593 / LMG 18877 / RB2256</strain>
    </source>
</reference>
<evidence type="ECO:0000255" key="1">
    <source>
        <dbReference type="HAMAP-Rule" id="MF_01351"/>
    </source>
</evidence>